<protein>
    <recommendedName>
        <fullName>Cholecystokinin receptor</fullName>
    </recommendedName>
    <alternativeName>
        <fullName>CCK-XLR</fullName>
    </alternativeName>
</protein>
<name>CCKAR_XENLA</name>
<feature type="chain" id="PRO_0000069227" description="Cholecystokinin receptor">
    <location>
        <begin position="1"/>
        <end position="453"/>
    </location>
</feature>
<feature type="topological domain" description="Extracellular" evidence="2">
    <location>
        <begin position="1"/>
        <end position="64"/>
    </location>
</feature>
<feature type="transmembrane region" description="Helical; Name=1" evidence="2">
    <location>
        <begin position="65"/>
        <end position="94"/>
    </location>
</feature>
<feature type="topological domain" description="Cytoplasmic" evidence="2">
    <location>
        <begin position="95"/>
        <end position="104"/>
    </location>
</feature>
<feature type="transmembrane region" description="Helical; Name=2" evidence="2">
    <location>
        <begin position="105"/>
        <end position="131"/>
    </location>
</feature>
<feature type="topological domain" description="Extracellular" evidence="2">
    <location>
        <begin position="132"/>
        <end position="142"/>
    </location>
</feature>
<feature type="transmembrane region" description="Helical; Name=3" evidence="2">
    <location>
        <begin position="143"/>
        <end position="164"/>
    </location>
</feature>
<feature type="topological domain" description="Cytoplasmic" evidence="2">
    <location>
        <begin position="165"/>
        <end position="184"/>
    </location>
</feature>
<feature type="transmembrane region" description="Helical; Name=4" evidence="2">
    <location>
        <begin position="185"/>
        <end position="205"/>
    </location>
</feature>
<feature type="topological domain" description="Extracellular" evidence="2">
    <location>
        <begin position="206"/>
        <end position="237"/>
    </location>
</feature>
<feature type="transmembrane region" description="Helical; Name=5" evidence="2">
    <location>
        <begin position="238"/>
        <end position="261"/>
    </location>
</feature>
<feature type="topological domain" description="Cytoplasmic" evidence="2">
    <location>
        <begin position="262"/>
        <end position="343"/>
    </location>
</feature>
<feature type="transmembrane region" description="Helical; Name=6" evidence="2">
    <location>
        <begin position="344"/>
        <end position="364"/>
    </location>
</feature>
<feature type="topological domain" description="Extracellular" evidence="2">
    <location>
        <begin position="365"/>
        <end position="379"/>
    </location>
</feature>
<feature type="transmembrane region" description="Helical; Name=7" evidence="2">
    <location>
        <begin position="380"/>
        <end position="403"/>
    </location>
</feature>
<feature type="topological domain" description="Cytoplasmic" evidence="2">
    <location>
        <begin position="404"/>
        <end position="453"/>
    </location>
</feature>
<feature type="lipid moiety-binding region" description="S-palmitoyl cysteine" evidence="1">
    <location>
        <position position="401"/>
    </location>
</feature>
<feature type="glycosylation site" description="N-linked (GlcNAc...) asparagine" evidence="2">
    <location>
        <position position="9"/>
    </location>
</feature>
<feature type="glycosylation site" description="N-linked (GlcNAc...) asparagine" evidence="2">
    <location>
        <position position="22"/>
    </location>
</feature>
<feature type="glycosylation site" description="N-linked (GlcNAc...) asparagine" evidence="2">
    <location>
        <position position="30"/>
    </location>
</feature>
<feature type="glycosylation site" description="N-linked (GlcNAc...) asparagine" evidence="2">
    <location>
        <position position="35"/>
    </location>
</feature>
<feature type="glycosylation site" description="N-linked (GlcNAc...) asparagine" evidence="2">
    <location>
        <position position="39"/>
    </location>
</feature>
<feature type="disulfide bond" evidence="3">
    <location>
        <begin position="141"/>
        <end position="223"/>
    </location>
</feature>
<proteinExistence type="evidence at transcript level"/>
<accession>P70031</accession>
<evidence type="ECO:0000250" key="1"/>
<evidence type="ECO:0000255" key="2"/>
<evidence type="ECO:0000255" key="3">
    <source>
        <dbReference type="PROSITE-ProRule" id="PRU00521"/>
    </source>
</evidence>
<reference key="1">
    <citation type="journal article" date="1996" name="Mol. Pharmacol.">
        <title>Identification of cholecystokinin-B/gastrin receptor domains that confer high gastrin affinity: utilization of a novel Xenopus laevis cholecystokinin receptor.</title>
        <authorList>
            <person name="Schmitz F."/>
            <person name="Pratt D.S."/>
            <person name="Wu M.-J."/>
            <person name="Kolakowski L.F. Jr."/>
            <person name="Beinborn M."/>
            <person name="Kopin A.S."/>
        </authorList>
    </citation>
    <scope>NUCLEOTIDE SEQUENCE [MRNA]</scope>
    <source>
        <tissue>Brain</tissue>
    </source>
</reference>
<organism>
    <name type="scientific">Xenopus laevis</name>
    <name type="common">African clawed frog</name>
    <dbReference type="NCBI Taxonomy" id="8355"/>
    <lineage>
        <taxon>Eukaryota</taxon>
        <taxon>Metazoa</taxon>
        <taxon>Chordata</taxon>
        <taxon>Craniata</taxon>
        <taxon>Vertebrata</taxon>
        <taxon>Euteleostomi</taxon>
        <taxon>Amphibia</taxon>
        <taxon>Batrachia</taxon>
        <taxon>Anura</taxon>
        <taxon>Pipoidea</taxon>
        <taxon>Pipidae</taxon>
        <taxon>Xenopodinae</taxon>
        <taxon>Xenopus</taxon>
        <taxon>Xenopus</taxon>
    </lineage>
</organism>
<sequence length="453" mass="51157">MESLRSLSNISALHELLCRYSNLSGTLTWNLSSTNGTHNLTTANWPPWNLNCTPILDRKKPSPSDLNLWVRIVMYSVIFLLSVFGNTLIIIVLVMNKRLRTITNSFLLSLALSDLMVAVLCMPFTLIPNLMENFIFGEVICRAAAYFMGLSVSVSTFNLVAISIERYSAICNPLKSRVWQTRSHAYRVIAATWVLSSIIMIPYLVYNKTVTFPMKDRRVGHQCRLVWPSKQVQQAWYVLLLTILFFIPGVVMIVAYGLISRELYRGIQFEMDLNKEAKAHKNGVSTPTTIPSGDEGDGCYIQVTKRRNTMEMSTLTPSVCTKMDRARINNSEAKLMAKKRVIRMLIVIVAMFFICWMPIFVANTWKAFDELSAFNTLTGAPISFIHLLSYTSACVNPLIYCFMNKRFRKAFLGTFSSCIKPCRNFRDTDEDIAATGASLSKFSYTTVSSLGPA</sequence>
<comment type="function">
    <text>Receptor for cholecystokinin. This receptor mediates its action by association with G proteins that activate a phosphatidylinositol-calcium second messenger system. Has high affinity for CCK-8 and low affinities for gastrin-17-I, CCK-4, and unsulfated CCK-8.</text>
</comment>
<comment type="subcellular location">
    <subcellularLocation>
        <location>Cell membrane</location>
        <topology>Multi-pass membrane protein</topology>
    </subcellularLocation>
</comment>
<comment type="tissue specificity">
    <text>Brain and stomach.</text>
</comment>
<comment type="similarity">
    <text evidence="3">Belongs to the G-protein coupled receptor 1 family.</text>
</comment>
<keyword id="KW-1003">Cell membrane</keyword>
<keyword id="KW-1015">Disulfide bond</keyword>
<keyword id="KW-0297">G-protein coupled receptor</keyword>
<keyword id="KW-0325">Glycoprotein</keyword>
<keyword id="KW-0449">Lipoprotein</keyword>
<keyword id="KW-0472">Membrane</keyword>
<keyword id="KW-0564">Palmitate</keyword>
<keyword id="KW-0675">Receptor</keyword>
<keyword id="KW-1185">Reference proteome</keyword>
<keyword id="KW-0807">Transducer</keyword>
<keyword id="KW-0812">Transmembrane</keyword>
<keyword id="KW-1133">Transmembrane helix</keyword>
<gene>
    <name type="primary">cckar</name>
</gene>
<dbReference type="EMBL" id="U49258">
    <property type="protein sequence ID" value="AAB09052.1"/>
    <property type="molecule type" value="mRNA"/>
</dbReference>
<dbReference type="RefSeq" id="NP_001079277.1">
    <property type="nucleotide sequence ID" value="NM_001085808.1"/>
</dbReference>
<dbReference type="SMR" id="P70031"/>
<dbReference type="GlyCosmos" id="P70031">
    <property type="glycosylation" value="5 sites, No reported glycans"/>
</dbReference>
<dbReference type="GeneID" id="378563"/>
<dbReference type="KEGG" id="xla:378563"/>
<dbReference type="AGR" id="Xenbase:XB-GENE-5793825"/>
<dbReference type="CTD" id="378563"/>
<dbReference type="Xenbase" id="XB-GENE-5793825">
    <property type="gene designation" value="cckbr.L"/>
</dbReference>
<dbReference type="OMA" id="GCYVNLL"/>
<dbReference type="OrthoDB" id="5987936at2759"/>
<dbReference type="Proteomes" id="UP000186698">
    <property type="component" value="Chromosome 2L"/>
</dbReference>
<dbReference type="Bgee" id="378563">
    <property type="expression patterns" value="Expressed in stomach and 2 other cell types or tissues"/>
</dbReference>
<dbReference type="GO" id="GO:0005886">
    <property type="term" value="C:plasma membrane"/>
    <property type="evidence" value="ECO:0000318"/>
    <property type="project" value="GO_Central"/>
</dbReference>
<dbReference type="GO" id="GO:0008188">
    <property type="term" value="F:neuropeptide receptor activity"/>
    <property type="evidence" value="ECO:0000318"/>
    <property type="project" value="GO_Central"/>
</dbReference>
<dbReference type="GO" id="GO:0007218">
    <property type="term" value="P:neuropeptide signaling pathway"/>
    <property type="evidence" value="ECO:0000318"/>
    <property type="project" value="GO_Central"/>
</dbReference>
<dbReference type="CDD" id="cd15979">
    <property type="entry name" value="7tmA_CCK-BR"/>
    <property type="match status" value="1"/>
</dbReference>
<dbReference type="FunFam" id="1.20.1070.10:FF:000915">
    <property type="entry name" value="Uncharacterized protein"/>
    <property type="match status" value="1"/>
</dbReference>
<dbReference type="Gene3D" id="1.20.1070.10">
    <property type="entry name" value="Rhodopsin 7-helix transmembrane proteins"/>
    <property type="match status" value="1"/>
</dbReference>
<dbReference type="InterPro" id="IPR009126">
    <property type="entry name" value="Cholcskin_rcpt"/>
</dbReference>
<dbReference type="InterPro" id="IPR000276">
    <property type="entry name" value="GPCR_Rhodpsn"/>
</dbReference>
<dbReference type="InterPro" id="IPR017452">
    <property type="entry name" value="GPCR_Rhodpsn_7TM"/>
</dbReference>
<dbReference type="PANTHER" id="PTHR24238">
    <property type="entry name" value="G-PROTEIN COUPLED RECEPTOR"/>
    <property type="match status" value="1"/>
</dbReference>
<dbReference type="PANTHER" id="PTHR24238:SF79">
    <property type="entry name" value="GASTRIN_CHOLECYSTOKININ TYPE B RECEPTOR"/>
    <property type="match status" value="1"/>
</dbReference>
<dbReference type="Pfam" id="PF00001">
    <property type="entry name" value="7tm_1"/>
    <property type="match status" value="1"/>
</dbReference>
<dbReference type="PRINTS" id="PR01822">
    <property type="entry name" value="CCYSTOKININR"/>
</dbReference>
<dbReference type="PRINTS" id="PR00237">
    <property type="entry name" value="GPCRRHODOPSN"/>
</dbReference>
<dbReference type="SMART" id="SM01381">
    <property type="entry name" value="7TM_GPCR_Srsx"/>
    <property type="match status" value="1"/>
</dbReference>
<dbReference type="SUPFAM" id="SSF81321">
    <property type="entry name" value="Family A G protein-coupled receptor-like"/>
    <property type="match status" value="1"/>
</dbReference>
<dbReference type="PROSITE" id="PS00237">
    <property type="entry name" value="G_PROTEIN_RECEP_F1_1"/>
    <property type="match status" value="1"/>
</dbReference>
<dbReference type="PROSITE" id="PS50262">
    <property type="entry name" value="G_PROTEIN_RECEP_F1_2"/>
    <property type="match status" value="1"/>
</dbReference>